<organism>
    <name type="scientific">Saccharomyces cerevisiae (strain ATCC 204508 / S288c)</name>
    <name type="common">Baker's yeast</name>
    <dbReference type="NCBI Taxonomy" id="559292"/>
    <lineage>
        <taxon>Eukaryota</taxon>
        <taxon>Fungi</taxon>
        <taxon>Dikarya</taxon>
        <taxon>Ascomycota</taxon>
        <taxon>Saccharomycotina</taxon>
        <taxon>Saccharomycetes</taxon>
        <taxon>Saccharomycetales</taxon>
        <taxon>Saccharomycetaceae</taxon>
        <taxon>Saccharomyces</taxon>
    </lineage>
</organism>
<accession>P20084</accession>
<accession>D6W0B3</accession>
<sequence length="86" mass="9531">MVFYKVTLSRSLIGVPHTTKSIVKSLGLGKRGSIVYKKVNPAIAGSLAKVKELVKVEVTEHELTPSQQRELRKSNPGFIVEKRTID</sequence>
<protein>
    <recommendedName>
        <fullName evidence="8">Large ribosomal subunit protein uL30m</fullName>
    </recommendedName>
    <alternativeName>
        <fullName>54S ribosomal protein L33, mitochondrial</fullName>
    </alternativeName>
    <alternativeName>
        <fullName>YmL33</fullName>
    </alternativeName>
</protein>
<name>RM33_YEAST</name>
<feature type="initiator methionine" description="Removed" evidence="5">
    <location>
        <position position="1"/>
    </location>
</feature>
<feature type="chain" id="PRO_0000104619" description="Large ribosomal subunit protein uL30m">
    <location>
        <begin position="2"/>
        <end position="86"/>
    </location>
</feature>
<feature type="region of interest" description="Disordered" evidence="1">
    <location>
        <begin position="67"/>
        <end position="86"/>
    </location>
</feature>
<feature type="sequence conflict" description="In Ref. 1." evidence="9" ref="1">
    <original>EKRTID</original>
    <variation>GEENHRLKQRNKALDFLSS</variation>
    <location>
        <begin position="81"/>
        <end position="86"/>
    </location>
</feature>
<proteinExistence type="evidence at protein level"/>
<comment type="function">
    <text evidence="10 11">Component of the mitochondrial ribosome (mitoribosome), a dedicated translation machinery responsible for the synthesis of mitochondrial genome-encoded proteins, including at least some of the essential transmembrane subunits of the mitochondrial respiratory chain. The mitoribosomes are attached to the mitochondrial inner membrane and translation products are cotranslationally integrated into the membrane.</text>
</comment>
<comment type="subunit">
    <text evidence="5 6">Component of the mitochondrial large ribosomal subunit (mt-LSU). Mature yeast 74S mitochondrial ribosomes consist of a small (37S) and a large (54S) subunit. The 37S small subunit contains a 15S ribosomal RNA (15S mt-rRNA) and 34 different proteins. The 54S large subunit contains a 21S rRNA (21S mt-rRNA) and 46 different proteins.</text>
</comment>
<comment type="subcellular location">
    <subcellularLocation>
        <location evidence="2 4">Mitochondrion</location>
    </subcellularLocation>
    <text evidence="7">Mitoribosomes are tethered to the mitochondrial inner membrane and spatially aligned with the membrane insertion machinery through two distinct membrane contact sites, formed by the 21S rRNA expansion segment 96-ES1 and the inner membrane protein MBA1.</text>
</comment>
<comment type="miscellaneous">
    <text evidence="3">Present with 1200 molecules/cell in log phase SD medium.</text>
</comment>
<comment type="similarity">
    <text evidence="9">Belongs to the universal ribosomal protein uL30 family.</text>
</comment>
<reference key="1">
    <citation type="journal article" date="1991" name="J. Bacteriol.">
        <title>Cloning and analysis of the nuclear gene for YmL33, a protein of the large subunit of the mitochondrial ribosome in Saccharomyces cerevisiae.</title>
        <authorList>
            <person name="Kang W.K."/>
            <person name="Matsushita Y."/>
            <person name="Grohmann L."/>
            <person name="Graack H.-R."/>
            <person name="Kitakawa M."/>
            <person name="Isono K."/>
        </authorList>
    </citation>
    <scope>NUCLEOTIDE SEQUENCE [GENOMIC DNA]</scope>
    <source>
        <strain>ATCC 64665 / S288c / DC5</strain>
    </source>
</reference>
<reference key="2">
    <citation type="journal article" date="1997" name="Nature">
        <title>The nucleotide sequence of Saccharomyces cerevisiae chromosome XIII.</title>
        <authorList>
            <person name="Bowman S."/>
            <person name="Churcher C.M."/>
            <person name="Badcock K."/>
            <person name="Brown D."/>
            <person name="Chillingworth T."/>
            <person name="Connor R."/>
            <person name="Dedman K."/>
            <person name="Devlin K."/>
            <person name="Gentles S."/>
            <person name="Hamlin N."/>
            <person name="Hunt S."/>
            <person name="Jagels K."/>
            <person name="Lye G."/>
            <person name="Moule S."/>
            <person name="Odell C."/>
            <person name="Pearson D."/>
            <person name="Rajandream M.A."/>
            <person name="Rice P."/>
            <person name="Skelton J."/>
            <person name="Walsh S.V."/>
            <person name="Whitehead S."/>
            <person name="Barrell B.G."/>
        </authorList>
    </citation>
    <scope>NUCLEOTIDE SEQUENCE [LARGE SCALE GENOMIC DNA]</scope>
    <source>
        <strain>ATCC 204508 / S288c</strain>
    </source>
</reference>
<reference key="3">
    <citation type="journal article" date="2014" name="G3 (Bethesda)">
        <title>The reference genome sequence of Saccharomyces cerevisiae: Then and now.</title>
        <authorList>
            <person name="Engel S.R."/>
            <person name="Dietrich F.S."/>
            <person name="Fisk D.G."/>
            <person name="Binkley G."/>
            <person name="Balakrishnan R."/>
            <person name="Costanzo M.C."/>
            <person name="Dwight S.S."/>
            <person name="Hitz B.C."/>
            <person name="Karra K."/>
            <person name="Nash R.S."/>
            <person name="Weng S."/>
            <person name="Wong E.D."/>
            <person name="Lloyd P."/>
            <person name="Skrzypek M.S."/>
            <person name="Miyasato S.R."/>
            <person name="Simison M."/>
            <person name="Cherry J.M."/>
        </authorList>
    </citation>
    <scope>GENOME REANNOTATION</scope>
    <source>
        <strain>ATCC 204508 / S288c</strain>
    </source>
</reference>
<reference key="4">
    <citation type="journal article" date="2007" name="Genome Res.">
        <title>Approaching a complete repository of sequence-verified protein-encoding clones for Saccharomyces cerevisiae.</title>
        <authorList>
            <person name="Hu Y."/>
            <person name="Rolfs A."/>
            <person name="Bhullar B."/>
            <person name="Murthy T.V.S."/>
            <person name="Zhu C."/>
            <person name="Berger M.F."/>
            <person name="Camargo A.A."/>
            <person name="Kelley F."/>
            <person name="McCarron S."/>
            <person name="Jepson D."/>
            <person name="Richardson A."/>
            <person name="Raphael J."/>
            <person name="Moreira D."/>
            <person name="Taycher E."/>
            <person name="Zuo D."/>
            <person name="Mohr S."/>
            <person name="Kane M.F."/>
            <person name="Williamson J."/>
            <person name="Simpson A.J.G."/>
            <person name="Bulyk M.L."/>
            <person name="Harlow E."/>
            <person name="Marsischky G."/>
            <person name="Kolodner R.D."/>
            <person name="LaBaer J."/>
        </authorList>
    </citation>
    <scope>NUCLEOTIDE SEQUENCE [GENOMIC DNA]</scope>
    <source>
        <strain>ATCC 204508 / S288c</strain>
    </source>
</reference>
<reference key="5">
    <citation type="journal article" date="1991" name="FEBS Lett.">
        <title>Extended N-terminal sequencing of proteins of the large ribosomal subunit from yeast mitochondria.</title>
        <authorList>
            <person name="Grohmann L."/>
            <person name="Graack H.-R."/>
            <person name="Kruft V."/>
            <person name="Choli T."/>
            <person name="Goldschmidt-Reisin S."/>
            <person name="Kitakawa M."/>
        </authorList>
    </citation>
    <scope>PROTEIN SEQUENCE OF 2-41</scope>
    <scope>SUBUNIT</scope>
    <source>
        <strain>07173</strain>
    </source>
</reference>
<reference key="6">
    <citation type="journal article" date="2003" name="Nature">
        <title>Global analysis of protein localization in budding yeast.</title>
        <authorList>
            <person name="Huh W.-K."/>
            <person name="Falvo J.V."/>
            <person name="Gerke L.C."/>
            <person name="Carroll A.S."/>
            <person name="Howson R.W."/>
            <person name="Weissman J.S."/>
            <person name="O'Shea E.K."/>
        </authorList>
    </citation>
    <scope>SUBCELLULAR LOCATION [LARGE SCALE ANALYSIS]</scope>
</reference>
<reference key="7">
    <citation type="journal article" date="2003" name="Nature">
        <title>Global analysis of protein expression in yeast.</title>
        <authorList>
            <person name="Ghaemmaghami S."/>
            <person name="Huh W.-K."/>
            <person name="Bower K."/>
            <person name="Howson R.W."/>
            <person name="Belle A."/>
            <person name="Dephoure N."/>
            <person name="O'Shea E.K."/>
            <person name="Weissman J.S."/>
        </authorList>
    </citation>
    <scope>LEVEL OF PROTEIN EXPRESSION [LARGE SCALE ANALYSIS]</scope>
</reference>
<reference key="8">
    <citation type="journal article" date="2003" name="Proc. Natl. Acad. Sci. U.S.A.">
        <title>The proteome of Saccharomyces cerevisiae mitochondria.</title>
        <authorList>
            <person name="Sickmann A."/>
            <person name="Reinders J."/>
            <person name="Wagner Y."/>
            <person name="Joppich C."/>
            <person name="Zahedi R.P."/>
            <person name="Meyer H.E."/>
            <person name="Schoenfisch B."/>
            <person name="Perschil I."/>
            <person name="Chacinska A."/>
            <person name="Guiard B."/>
            <person name="Rehling P."/>
            <person name="Pfanner N."/>
            <person name="Meisinger C."/>
        </authorList>
    </citation>
    <scope>SUBCELLULAR LOCATION [LARGE SCALE ANALYSIS]</scope>
    <source>
        <strain>ATCC 76625 / YPH499</strain>
    </source>
</reference>
<reference key="9">
    <citation type="journal article" date="2015" name="Nat. Commun.">
        <title>Organization of the mitochondrial translation machinery studied in situ by cryoelectron tomography.</title>
        <authorList>
            <person name="Pfeffer S."/>
            <person name="Woellhaf M.W."/>
            <person name="Herrmann J.M."/>
            <person name="Forster F."/>
        </authorList>
    </citation>
    <scope>SUBCELLULAR LOCATION</scope>
</reference>
<reference key="10">
    <citation type="journal article" date="2014" name="Science">
        <title>Structure of the yeast mitochondrial large ribosomal subunit.</title>
        <authorList>
            <person name="Amunts A."/>
            <person name="Brown A."/>
            <person name="Bai X.C."/>
            <person name="Llacer J.L."/>
            <person name="Hussain T."/>
            <person name="Emsley P."/>
            <person name="Long F."/>
            <person name="Murshudov G."/>
            <person name="Scheres S.H."/>
            <person name="Ramakrishnan V."/>
        </authorList>
    </citation>
    <scope>STRUCTURE BY ELECTRON MICROSCOPY (3.20 ANGSTROMS)</scope>
    <scope>SUBUNIT</scope>
</reference>
<dbReference type="EMBL" id="D90217">
    <property type="protein sequence ID" value="BAA14249.1"/>
    <property type="molecule type" value="Genomic_DNA"/>
</dbReference>
<dbReference type="EMBL" id="Z49704">
    <property type="protein sequence ID" value="CAA89784.1"/>
    <property type="molecule type" value="Genomic_DNA"/>
</dbReference>
<dbReference type="EMBL" id="AY558130">
    <property type="protein sequence ID" value="AAS56456.1"/>
    <property type="molecule type" value="Genomic_DNA"/>
</dbReference>
<dbReference type="EMBL" id="BK006946">
    <property type="protein sequence ID" value="DAA10187.1"/>
    <property type="molecule type" value="Genomic_DNA"/>
</dbReference>
<dbReference type="PIR" id="S54593">
    <property type="entry name" value="S54593"/>
</dbReference>
<dbReference type="RefSeq" id="NP_014013.1">
    <property type="nucleotide sequence ID" value="NM_001182793.1"/>
</dbReference>
<dbReference type="PDB" id="3J6B">
    <property type="method" value="EM"/>
    <property type="resolution" value="3.20 A"/>
    <property type="chains" value="U=1-86"/>
</dbReference>
<dbReference type="PDB" id="5MRC">
    <property type="method" value="EM"/>
    <property type="resolution" value="3.25 A"/>
    <property type="chains" value="U=2-83"/>
</dbReference>
<dbReference type="PDB" id="5MRE">
    <property type="method" value="EM"/>
    <property type="resolution" value="3.75 A"/>
    <property type="chains" value="U=2-83"/>
</dbReference>
<dbReference type="PDB" id="5MRF">
    <property type="method" value="EM"/>
    <property type="resolution" value="4.97 A"/>
    <property type="chains" value="U=2-83"/>
</dbReference>
<dbReference type="PDBsum" id="3J6B"/>
<dbReference type="PDBsum" id="5MRC"/>
<dbReference type="PDBsum" id="5MRE"/>
<dbReference type="PDBsum" id="5MRF"/>
<dbReference type="EMDB" id="EMD-3551"/>
<dbReference type="EMDB" id="EMD-3552"/>
<dbReference type="EMDB" id="EMD-3553"/>
<dbReference type="SMR" id="P20084"/>
<dbReference type="BioGRID" id="35466">
    <property type="interactions" value="92"/>
</dbReference>
<dbReference type="ComplexPortal" id="CPX-1602">
    <property type="entry name" value="54S mitochondrial large ribosomal subunit"/>
</dbReference>
<dbReference type="DIP" id="DIP-8330N"/>
<dbReference type="FunCoup" id="P20084">
    <property type="interactions" value="275"/>
</dbReference>
<dbReference type="IntAct" id="P20084">
    <property type="interactions" value="68"/>
</dbReference>
<dbReference type="STRING" id="4932.YMR286W"/>
<dbReference type="iPTMnet" id="P20084"/>
<dbReference type="PaxDb" id="4932-YMR286W"/>
<dbReference type="PeptideAtlas" id="P20084"/>
<dbReference type="EnsemblFungi" id="YMR286W_mRNA">
    <property type="protein sequence ID" value="YMR286W"/>
    <property type="gene ID" value="YMR286W"/>
</dbReference>
<dbReference type="GeneID" id="855330"/>
<dbReference type="KEGG" id="sce:YMR286W"/>
<dbReference type="AGR" id="SGD:S000004899"/>
<dbReference type="SGD" id="S000004899">
    <property type="gene designation" value="MRPL33"/>
</dbReference>
<dbReference type="VEuPathDB" id="FungiDB:YMR286W"/>
<dbReference type="eggNOG" id="ENOG502S7S3">
    <property type="taxonomic scope" value="Eukaryota"/>
</dbReference>
<dbReference type="HOGENOM" id="CLU_131047_0_2_1"/>
<dbReference type="InParanoid" id="P20084"/>
<dbReference type="OMA" id="FHPAEPQ"/>
<dbReference type="OrthoDB" id="509901at2759"/>
<dbReference type="BioCyc" id="YEAST:G3O-32956-MONOMER"/>
<dbReference type="BioGRID-ORCS" id="855330">
    <property type="hits" value="6 hits in 10 CRISPR screens"/>
</dbReference>
<dbReference type="PRO" id="PR:P20084"/>
<dbReference type="Proteomes" id="UP000002311">
    <property type="component" value="Chromosome XIII"/>
</dbReference>
<dbReference type="RNAct" id="P20084">
    <property type="molecule type" value="protein"/>
</dbReference>
<dbReference type="GO" id="GO:0005743">
    <property type="term" value="C:mitochondrial inner membrane"/>
    <property type="evidence" value="ECO:0000303"/>
    <property type="project" value="ComplexPortal"/>
</dbReference>
<dbReference type="GO" id="GO:0005762">
    <property type="term" value="C:mitochondrial large ribosomal subunit"/>
    <property type="evidence" value="ECO:0000314"/>
    <property type="project" value="SGD"/>
</dbReference>
<dbReference type="GO" id="GO:0005739">
    <property type="term" value="C:mitochondrion"/>
    <property type="evidence" value="ECO:0007005"/>
    <property type="project" value="SGD"/>
</dbReference>
<dbReference type="GO" id="GO:0003735">
    <property type="term" value="F:structural constituent of ribosome"/>
    <property type="evidence" value="ECO:0000314"/>
    <property type="project" value="SGD"/>
</dbReference>
<dbReference type="GO" id="GO:0032543">
    <property type="term" value="P:mitochondrial translation"/>
    <property type="evidence" value="ECO:0000303"/>
    <property type="project" value="ComplexPortal"/>
</dbReference>
<dbReference type="CDD" id="cd01658">
    <property type="entry name" value="Ribosomal_L30"/>
    <property type="match status" value="1"/>
</dbReference>
<dbReference type="FunFam" id="3.30.1390.20:FF:000010">
    <property type="entry name" value="Large subunit ribosomal protein L30"/>
    <property type="match status" value="1"/>
</dbReference>
<dbReference type="Gene3D" id="3.30.1390.20">
    <property type="entry name" value="Ribosomal protein L30, ferredoxin-like fold domain"/>
    <property type="match status" value="1"/>
</dbReference>
<dbReference type="InterPro" id="IPR036919">
    <property type="entry name" value="Ribo_uL30_ferredoxin-like_sf"/>
</dbReference>
<dbReference type="InterPro" id="IPR005996">
    <property type="entry name" value="Ribosomal_uL30_bac-type"/>
</dbReference>
<dbReference type="InterPro" id="IPR018038">
    <property type="entry name" value="Ribosomal_uL30_CS"/>
</dbReference>
<dbReference type="InterPro" id="IPR016082">
    <property type="entry name" value="Ribosomal_uL30_ferredoxin-like"/>
</dbReference>
<dbReference type="NCBIfam" id="TIGR01308">
    <property type="entry name" value="rpmD_bact"/>
    <property type="match status" value="1"/>
</dbReference>
<dbReference type="PANTHER" id="PTHR15892:SF2">
    <property type="entry name" value="LARGE RIBOSOMAL SUBUNIT PROTEIN UL30M"/>
    <property type="match status" value="1"/>
</dbReference>
<dbReference type="PANTHER" id="PTHR15892">
    <property type="entry name" value="MITOCHONDRIAL RIBOSOMAL PROTEIN L30"/>
    <property type="match status" value="1"/>
</dbReference>
<dbReference type="Pfam" id="PF00327">
    <property type="entry name" value="Ribosomal_L30"/>
    <property type="match status" value="1"/>
</dbReference>
<dbReference type="SUPFAM" id="SSF55129">
    <property type="entry name" value="Ribosomal protein L30p/L7e"/>
    <property type="match status" value="1"/>
</dbReference>
<dbReference type="PROSITE" id="PS00634">
    <property type="entry name" value="RIBOSOMAL_L30"/>
    <property type="match status" value="1"/>
</dbReference>
<gene>
    <name type="primary">MRPL33</name>
    <name type="ordered locus">YMR286W</name>
    <name type="ORF">YM8021.12</name>
</gene>
<keyword id="KW-0002">3D-structure</keyword>
<keyword id="KW-0903">Direct protein sequencing</keyword>
<keyword id="KW-0496">Mitochondrion</keyword>
<keyword id="KW-1185">Reference proteome</keyword>
<keyword id="KW-0687">Ribonucleoprotein</keyword>
<keyword id="KW-0689">Ribosomal protein</keyword>
<evidence type="ECO:0000256" key="1">
    <source>
        <dbReference type="SAM" id="MobiDB-lite"/>
    </source>
</evidence>
<evidence type="ECO:0000269" key="2">
    <source>
    </source>
</evidence>
<evidence type="ECO:0000269" key="3">
    <source>
    </source>
</evidence>
<evidence type="ECO:0000269" key="4">
    <source>
    </source>
</evidence>
<evidence type="ECO:0000269" key="5">
    <source>
    </source>
</evidence>
<evidence type="ECO:0000269" key="6">
    <source>
    </source>
</evidence>
<evidence type="ECO:0000269" key="7">
    <source>
    </source>
</evidence>
<evidence type="ECO:0000303" key="8">
    <source>
    </source>
</evidence>
<evidence type="ECO:0000305" key="9"/>
<evidence type="ECO:0000305" key="10">
    <source>
    </source>
</evidence>
<evidence type="ECO:0000305" key="11">
    <source>
    </source>
</evidence>